<comment type="function">
    <text evidence="1">Component of the srb8-11 complex. The srb8-11 complex is a regulatory module of the Mediator complex which is itself involved in regulation of basal and activated RNA polymerase II-dependent transcription. The srb8-11 complex may be involved in the transcriptional repression of a subset of genes regulated by Mediator. It may inhibit the association of the Mediator complex with RNA polymerase II to form the holoenzyme complex (By similarity).</text>
</comment>
<comment type="subunit">
    <text evidence="1">Component of the srb8-11 complex, which itself associates with the Mediator complex.</text>
</comment>
<comment type="subcellular location">
    <subcellularLocation>
        <location evidence="3">Nucleus</location>
    </subcellularLocation>
</comment>
<comment type="similarity">
    <text evidence="3">Belongs to the Mediator complex subunit 12 family.</text>
</comment>
<comment type="sequence caution" evidence="3">
    <conflict type="erroneous gene model prediction">
        <sequence resource="EMBL-CDS" id="CBF76885"/>
    </conflict>
</comment>
<comment type="sequence caution" evidence="3">
    <conflict type="erroneous gene model prediction">
        <sequence resource="EMBL-CDS" id="EAA60783"/>
    </conflict>
</comment>
<gene>
    <name type="primary">srb8</name>
    <name type="synonym">med12</name>
    <name type="ORF">AN4741</name>
</gene>
<name>SRB8_EMENI</name>
<accession>Q5B3Y9</accession>
<accession>C8VAT3</accession>
<keyword id="KW-0010">Activator</keyword>
<keyword id="KW-0539">Nucleus</keyword>
<keyword id="KW-1185">Reference proteome</keyword>
<keyword id="KW-0678">Repressor</keyword>
<keyword id="KW-0804">Transcription</keyword>
<keyword id="KW-0805">Transcription regulation</keyword>
<sequence length="1582" mass="174506">MIPNSSAGGQSWGHPLRNVDNDTARGDTSQAFNRPDIRSEGQQYTPALPRHPGQPAVIDLTSSANDAQEGQPPAKRLKLDITAESSANPASPTPATTGDSRVTPGIANSKPSALSWRGRPVWSFQAMISEVMSGAEATEEDAILAPQGKRPASPPPFPQPSWKGAPPEQFGSNATKASESDSSKKVQTTPFRVEVPSIAPALKGDKVADFAPWIGNHPEDILSEQTVKQGHYDRTQVSQNESNTARPSLYAQLKHRSGLQMLSSVFMAALEKRQNHNTINVPSNFKPPPRVTLTDNKREAWLRDLANPSVPLRRLSRTIPHGIRGKNLLDQCLSKWIPVNRAVWLVKCVGANEIRACKRKGTGGTLVVGSEVKWVRDWTSGVQQFLEGVIGACGSADWKSKMTYATSLTARLFFERLLDHDQYFAWFLTSLEGASLNMVPVWLLMLGIYWDSMLRYRKRGRRLAEVLLGKLHQTTELQRPTLLQPLAERLSCCIRKLVLEHTSSLILPNSWETHRDLILSCLNMKETADKTIFDSLAERNSRIQLPSSRSDSTRQSAHQRVIQLFDSIQSSQDIASTSVACLNALEDRQTLVIKLLEWSATSFRSGLHRVYTAARLLRKWKISGVDIDTYIISFLSTVQDLAQLDMDNVYHIISELVRSQTFSVSRYLQWLMAKGVARKSSGTSGEVLAADARLLTQLPMSRSPEHVRNLRLTLLARAGVSVDEESSTIKCLKSSISQRLPNIFEVEASNSKHINFSKHDLTWAVKSEVSMWIRQGVVKHLKDTTRISALTPGEFYCVREILERFGDCSILADVLKQAIECDDNIILASVSDTVNYHFDALSMIGATSDLFRGLVGSYARLKRSGNLSLDFVFSLIELGLRLPDESGTVYLLRQDLARIESKSALAAPSPLSDHIPTTFNEVDASFQERLEQLLSCGNGLDESTMGAIISSLTKILTDGGGAAKVSAKDACRYLAYLRPFNPKYLDGMLVRYVYGLLKSSSRPTMSQVLSPLIGVGCVTIHSFVLLVNKLSASAQTTGAIANPDSLRLDILELLLPQEESSADMVTYRFRLAQQEFLVKYPEETLNIISDAIPLFDADFHDANLGSRRPDLPACTVVLLRTLLAQNSSLVLKYCMQKLDGHSSFTTVLGKAVDILLGLDPEDEMEPSSQAERVILMNNDFSLPYCQLKLKLLFNAKAGNEVKNHIVDVMFKAAVTDSRSKRSHWVGLVSLMDQEAARQIRERAEGCFFSVAMFDESMDDTSLPSGASSLSSIESAKLYLNIIEKLAYSIPQAGVQSIPPLLVERLDLLLQKLIIMQINSNSVAASSSGSTIVSKINFERALAFWFSALLRLIVLHRAAFNVPPASGSKVDSLREQTRLLVSILCISLARLPENILRLFPAADYFPHTIQSHNFRPCPGILLQTHALDVAASLIDSFPDEARHQCVRFLRERCPPFLKFQNDRRFLYLLGPMTDTTIPSSQLSASISSPAAGGSTPTPIPSGTLSGGHSSQATQQMAALTGPFSGLSENTKLVADRLRIQNGGRINGPYPVRPWELLEDAAPILGVNDTAVSLKLFDARRVRA</sequence>
<evidence type="ECO:0000250" key="1"/>
<evidence type="ECO:0000256" key="2">
    <source>
        <dbReference type="SAM" id="MobiDB-lite"/>
    </source>
</evidence>
<evidence type="ECO:0000305" key="3"/>
<dbReference type="EMBL" id="AACD01000080">
    <property type="protein sequence ID" value="EAA60783.1"/>
    <property type="status" value="ALT_SEQ"/>
    <property type="molecule type" value="Genomic_DNA"/>
</dbReference>
<dbReference type="EMBL" id="BN001303">
    <property type="protein sequence ID" value="CBF76885.1"/>
    <property type="status" value="ALT_SEQ"/>
    <property type="molecule type" value="Genomic_DNA"/>
</dbReference>
<dbReference type="RefSeq" id="XP_662345.1">
    <property type="nucleotide sequence ID" value="XM_657253.1"/>
</dbReference>
<dbReference type="STRING" id="227321.Q5B3Y9"/>
<dbReference type="KEGG" id="ani:ANIA_04741"/>
<dbReference type="eggNOG" id="KOG4522">
    <property type="taxonomic scope" value="Eukaryota"/>
</dbReference>
<dbReference type="HOGENOM" id="CLU_002034_1_0_1"/>
<dbReference type="InParanoid" id="Q5B3Y9"/>
<dbReference type="OrthoDB" id="20828at2759"/>
<dbReference type="Proteomes" id="UP000000560">
    <property type="component" value="Chromosome III"/>
</dbReference>
<dbReference type="GO" id="GO:0016592">
    <property type="term" value="C:mediator complex"/>
    <property type="evidence" value="ECO:0007669"/>
    <property type="project" value="InterPro"/>
</dbReference>
<dbReference type="GO" id="GO:0003712">
    <property type="term" value="F:transcription coregulator activity"/>
    <property type="evidence" value="ECO:0007669"/>
    <property type="project" value="InterPro"/>
</dbReference>
<dbReference type="GO" id="GO:0006357">
    <property type="term" value="P:regulation of transcription by RNA polymerase II"/>
    <property type="evidence" value="ECO:0007669"/>
    <property type="project" value="InterPro"/>
</dbReference>
<dbReference type="InterPro" id="IPR019035">
    <property type="entry name" value="Mediator_Med12"/>
</dbReference>
<dbReference type="PANTHER" id="PTHR46567">
    <property type="entry name" value="MEDIATOR OF RNA POLYMERASE II TRANSCRIPTION SUBUNIT 12"/>
    <property type="match status" value="1"/>
</dbReference>
<dbReference type="PANTHER" id="PTHR46567:SF1">
    <property type="entry name" value="MEDIATOR OF RNA POLYMERASE II TRANSCRIPTION SUBUNIT 12"/>
    <property type="match status" value="1"/>
</dbReference>
<dbReference type="Pfam" id="PF25326">
    <property type="entry name" value="ARM_SRB8"/>
    <property type="match status" value="1"/>
</dbReference>
<dbReference type="Pfam" id="PF09497">
    <property type="entry name" value="Med12"/>
    <property type="match status" value="1"/>
</dbReference>
<dbReference type="SMART" id="SM01281">
    <property type="entry name" value="Med12"/>
    <property type="match status" value="1"/>
</dbReference>
<feature type="chain" id="PRO_0000312972" description="Mediator of RNA polymerase II transcription subunit 12">
    <location>
        <begin position="1"/>
        <end position="1582"/>
    </location>
</feature>
<feature type="region of interest" description="Disordered" evidence="2">
    <location>
        <begin position="1"/>
        <end position="114"/>
    </location>
</feature>
<feature type="region of interest" description="Disordered" evidence="2">
    <location>
        <begin position="146"/>
        <end position="189"/>
    </location>
</feature>
<feature type="region of interest" description="Disordered" evidence="2">
    <location>
        <begin position="1479"/>
        <end position="1512"/>
    </location>
</feature>
<feature type="compositionally biased region" description="Polar residues" evidence="2">
    <location>
        <begin position="83"/>
        <end position="100"/>
    </location>
</feature>
<feature type="compositionally biased region" description="Low complexity" evidence="2">
    <location>
        <begin position="1479"/>
        <end position="1493"/>
    </location>
</feature>
<feature type="compositionally biased region" description="Polar residues" evidence="2">
    <location>
        <begin position="1499"/>
        <end position="1512"/>
    </location>
</feature>
<protein>
    <recommendedName>
        <fullName>Mediator of RNA polymerase II transcription subunit 12</fullName>
    </recommendedName>
    <alternativeName>
        <fullName>Mediator complex subunit 12</fullName>
    </alternativeName>
</protein>
<organism>
    <name type="scientific">Emericella nidulans (strain FGSC A4 / ATCC 38163 / CBS 112.46 / NRRL 194 / M139)</name>
    <name type="common">Aspergillus nidulans</name>
    <dbReference type="NCBI Taxonomy" id="227321"/>
    <lineage>
        <taxon>Eukaryota</taxon>
        <taxon>Fungi</taxon>
        <taxon>Dikarya</taxon>
        <taxon>Ascomycota</taxon>
        <taxon>Pezizomycotina</taxon>
        <taxon>Eurotiomycetes</taxon>
        <taxon>Eurotiomycetidae</taxon>
        <taxon>Eurotiales</taxon>
        <taxon>Aspergillaceae</taxon>
        <taxon>Aspergillus</taxon>
        <taxon>Aspergillus subgen. Nidulantes</taxon>
    </lineage>
</organism>
<proteinExistence type="inferred from homology"/>
<reference key="1">
    <citation type="journal article" date="2005" name="Nature">
        <title>Sequencing of Aspergillus nidulans and comparative analysis with A. fumigatus and A. oryzae.</title>
        <authorList>
            <person name="Galagan J.E."/>
            <person name="Calvo S.E."/>
            <person name="Cuomo C."/>
            <person name="Ma L.-J."/>
            <person name="Wortman J.R."/>
            <person name="Batzoglou S."/>
            <person name="Lee S.-I."/>
            <person name="Bastuerkmen M."/>
            <person name="Spevak C.C."/>
            <person name="Clutterbuck J."/>
            <person name="Kapitonov V."/>
            <person name="Jurka J."/>
            <person name="Scazzocchio C."/>
            <person name="Farman M.L."/>
            <person name="Butler J."/>
            <person name="Purcell S."/>
            <person name="Harris S."/>
            <person name="Braus G.H."/>
            <person name="Draht O."/>
            <person name="Busch S."/>
            <person name="D'Enfert C."/>
            <person name="Bouchier C."/>
            <person name="Goldman G.H."/>
            <person name="Bell-Pedersen D."/>
            <person name="Griffiths-Jones S."/>
            <person name="Doonan J.H."/>
            <person name="Yu J."/>
            <person name="Vienken K."/>
            <person name="Pain A."/>
            <person name="Freitag M."/>
            <person name="Selker E.U."/>
            <person name="Archer D.B."/>
            <person name="Penalva M.A."/>
            <person name="Oakley B.R."/>
            <person name="Momany M."/>
            <person name="Tanaka T."/>
            <person name="Kumagai T."/>
            <person name="Asai K."/>
            <person name="Machida M."/>
            <person name="Nierman W.C."/>
            <person name="Denning D.W."/>
            <person name="Caddick M.X."/>
            <person name="Hynes M."/>
            <person name="Paoletti M."/>
            <person name="Fischer R."/>
            <person name="Miller B.L."/>
            <person name="Dyer P.S."/>
            <person name="Sachs M.S."/>
            <person name="Osmani S.A."/>
            <person name="Birren B.W."/>
        </authorList>
    </citation>
    <scope>NUCLEOTIDE SEQUENCE [LARGE SCALE GENOMIC DNA]</scope>
    <source>
        <strain>FGSC A4 / ATCC 38163 / CBS 112.46 / NRRL 194 / M139</strain>
    </source>
</reference>
<reference key="2">
    <citation type="journal article" date="2009" name="Fungal Genet. Biol.">
        <title>The 2008 update of the Aspergillus nidulans genome annotation: a community effort.</title>
        <authorList>
            <person name="Wortman J.R."/>
            <person name="Gilsenan J.M."/>
            <person name="Joardar V."/>
            <person name="Deegan J."/>
            <person name="Clutterbuck J."/>
            <person name="Andersen M.R."/>
            <person name="Archer D."/>
            <person name="Bencina M."/>
            <person name="Braus G."/>
            <person name="Coutinho P."/>
            <person name="von Dohren H."/>
            <person name="Doonan J."/>
            <person name="Driessen A.J."/>
            <person name="Durek P."/>
            <person name="Espeso E."/>
            <person name="Fekete E."/>
            <person name="Flipphi M."/>
            <person name="Estrada C.G."/>
            <person name="Geysens S."/>
            <person name="Goldman G."/>
            <person name="de Groot P.W."/>
            <person name="Hansen K."/>
            <person name="Harris S.D."/>
            <person name="Heinekamp T."/>
            <person name="Helmstaedt K."/>
            <person name="Henrissat B."/>
            <person name="Hofmann G."/>
            <person name="Homan T."/>
            <person name="Horio T."/>
            <person name="Horiuchi H."/>
            <person name="James S."/>
            <person name="Jones M."/>
            <person name="Karaffa L."/>
            <person name="Karanyi Z."/>
            <person name="Kato M."/>
            <person name="Keller N."/>
            <person name="Kelly D.E."/>
            <person name="Kiel J.A."/>
            <person name="Kim J.M."/>
            <person name="van der Klei I.J."/>
            <person name="Klis F.M."/>
            <person name="Kovalchuk A."/>
            <person name="Krasevec N."/>
            <person name="Kubicek C.P."/>
            <person name="Liu B."/>
            <person name="Maccabe A."/>
            <person name="Meyer V."/>
            <person name="Mirabito P."/>
            <person name="Miskei M."/>
            <person name="Mos M."/>
            <person name="Mullins J."/>
            <person name="Nelson D.R."/>
            <person name="Nielsen J."/>
            <person name="Oakley B.R."/>
            <person name="Osmani S.A."/>
            <person name="Pakula T."/>
            <person name="Paszewski A."/>
            <person name="Paulsen I."/>
            <person name="Pilsyk S."/>
            <person name="Pocsi I."/>
            <person name="Punt P.J."/>
            <person name="Ram A.F."/>
            <person name="Ren Q."/>
            <person name="Robellet X."/>
            <person name="Robson G."/>
            <person name="Seiboth B."/>
            <person name="van Solingen P."/>
            <person name="Specht T."/>
            <person name="Sun J."/>
            <person name="Taheri-Talesh N."/>
            <person name="Takeshita N."/>
            <person name="Ussery D."/>
            <person name="vanKuyk P.A."/>
            <person name="Visser H."/>
            <person name="van de Vondervoort P.J."/>
            <person name="de Vries R.P."/>
            <person name="Walton J."/>
            <person name="Xiang X."/>
            <person name="Xiong Y."/>
            <person name="Zeng A.P."/>
            <person name="Brandt B.W."/>
            <person name="Cornell M.J."/>
            <person name="van den Hondel C.A."/>
            <person name="Visser J."/>
            <person name="Oliver S.G."/>
            <person name="Turner G."/>
        </authorList>
    </citation>
    <scope>GENOME REANNOTATION</scope>
    <source>
        <strain>FGSC A4 / ATCC 38163 / CBS 112.46 / NRRL 194 / M139</strain>
    </source>
</reference>